<keyword id="KW-1185">Reference proteome</keyword>
<keyword id="KW-0732">Signal</keyword>
<gene>
    <name type="ordered locus">TP_0865</name>
</gene>
<name>Y865_TREPA</name>
<evidence type="ECO:0000255" key="1"/>
<evidence type="ECO:0000305" key="2"/>
<organism>
    <name type="scientific">Treponema pallidum (strain Nichols)</name>
    <dbReference type="NCBI Taxonomy" id="243276"/>
    <lineage>
        <taxon>Bacteria</taxon>
        <taxon>Pseudomonadati</taxon>
        <taxon>Spirochaetota</taxon>
        <taxon>Spirochaetia</taxon>
        <taxon>Spirochaetales</taxon>
        <taxon>Treponemataceae</taxon>
        <taxon>Treponema</taxon>
    </lineage>
</organism>
<sequence>MVRMRRRRACSSGGACGCAAVRGARSFLSVRVLGMRIGMSALCLAPLFARTASLGAWSSQGGEVLGEVRARVPAHRRVRRAVSGTSVTPVVAMAAKTSEKQKGVGRRALSLRTGGRYEMLGLAFTALADDASFFEANAAGSAAFPYLLVGGFHFARVNQSHTDTIALVHSIGRTGYGFSASVQYPYLTMEGKAVGGVAIFNVAHRFLSAYRFKGISVGTNVKVGYRDSSAGGERNKKNQGGKKHVVVTADIGLQGTWSVAKNFGSHEPNLWVGGTVKNVGLSVEVDASNSGSSMSGGRTVHATNSSFILACAYQPIRWFLFGTGIEWKYNVQEFADNNRFRYGVAFLLLPVQYVAFGSNVFLTGLASDIRASAGVEFKSTWVRVDLTYTYESDKDEHVISCGIAGFFNRDRRKHLEKEVYTSYLRGLRHYDAQHYEEAIAEWRRTLQRAGSFEPAREGIERATKLLQLNRQVYDFHFLH</sequence>
<accession>O83837</accession>
<dbReference type="EMBL" id="AE000520">
    <property type="protein sequence ID" value="AAC65833.1"/>
    <property type="molecule type" value="Genomic_DNA"/>
</dbReference>
<dbReference type="PIR" id="A71273">
    <property type="entry name" value="A71273"/>
</dbReference>
<dbReference type="RefSeq" id="WP_010882309.1">
    <property type="nucleotide sequence ID" value="NC_021490.2"/>
</dbReference>
<dbReference type="STRING" id="243276.TP_0865"/>
<dbReference type="EnsemblBacteria" id="AAC65833">
    <property type="protein sequence ID" value="AAC65833"/>
    <property type="gene ID" value="TP_0865"/>
</dbReference>
<dbReference type="KEGG" id="tpa:TP_0865"/>
<dbReference type="KEGG" id="tpw:TPANIC_0865"/>
<dbReference type="eggNOG" id="ENOG5033RFB">
    <property type="taxonomic scope" value="Bacteria"/>
</dbReference>
<dbReference type="HOGENOM" id="CLU_042920_0_0_12"/>
<dbReference type="OrthoDB" id="356467at2"/>
<dbReference type="Proteomes" id="UP000000811">
    <property type="component" value="Chromosome"/>
</dbReference>
<dbReference type="InterPro" id="IPR005362">
    <property type="entry name" value="UPF0164"/>
</dbReference>
<dbReference type="Pfam" id="PF03687">
    <property type="entry name" value="UPF0164"/>
    <property type="match status" value="1"/>
</dbReference>
<feature type="signal peptide" evidence="1">
    <location>
        <begin position="1"/>
        <end position="49"/>
    </location>
</feature>
<feature type="chain" id="PRO_0000036220" description="UPF0164 protein TP_0865">
    <location>
        <begin position="50"/>
        <end position="479"/>
    </location>
</feature>
<proteinExistence type="inferred from homology"/>
<reference key="1">
    <citation type="journal article" date="1998" name="Science">
        <title>Complete genome sequence of Treponema pallidum, the syphilis spirochete.</title>
        <authorList>
            <person name="Fraser C.M."/>
            <person name="Norris S.J."/>
            <person name="Weinstock G.M."/>
            <person name="White O."/>
            <person name="Sutton G.G."/>
            <person name="Dodson R.J."/>
            <person name="Gwinn M.L."/>
            <person name="Hickey E.K."/>
            <person name="Clayton R.A."/>
            <person name="Ketchum K.A."/>
            <person name="Sodergren E."/>
            <person name="Hardham J.M."/>
            <person name="McLeod M.P."/>
            <person name="Salzberg S.L."/>
            <person name="Peterson J.D."/>
            <person name="Khalak H.G."/>
            <person name="Richardson D.L."/>
            <person name="Howell J.K."/>
            <person name="Chidambaram M."/>
            <person name="Utterback T.R."/>
            <person name="McDonald L.A."/>
            <person name="Artiach P."/>
            <person name="Bowman C."/>
            <person name="Cotton M.D."/>
            <person name="Fujii C."/>
            <person name="Garland S.A."/>
            <person name="Hatch B."/>
            <person name="Horst K."/>
            <person name="Roberts K.M."/>
            <person name="Sandusky M."/>
            <person name="Weidman J.F."/>
            <person name="Smith H.O."/>
            <person name="Venter J.C."/>
        </authorList>
    </citation>
    <scope>NUCLEOTIDE SEQUENCE [LARGE SCALE GENOMIC DNA]</scope>
    <source>
        <strain>Nichols</strain>
    </source>
</reference>
<protein>
    <recommendedName>
        <fullName>UPF0164 protein TP_0865</fullName>
    </recommendedName>
</protein>
<comment type="similarity">
    <text evidence="2">Belongs to the UPF0164 family.</text>
</comment>